<gene>
    <name type="primary">St3gal6</name>
    <name type="synonym">Siat10</name>
</gene>
<keyword id="KW-0325">Glycoprotein</keyword>
<keyword id="KW-0328">Glycosyltransferase</keyword>
<keyword id="KW-0333">Golgi apparatus</keyword>
<keyword id="KW-0472">Membrane</keyword>
<keyword id="KW-1185">Reference proteome</keyword>
<keyword id="KW-0735">Signal-anchor</keyword>
<keyword id="KW-0808">Transferase</keyword>
<keyword id="KW-0812">Transmembrane</keyword>
<keyword id="KW-1133">Transmembrane helix</keyword>
<comment type="function">
    <text evidence="1 2">Transfers the sialyl residue from CMP-N-acetyl-beta-neuraminate to the terminal galactose residue on sugar chains of glycoproteins and glycolipids. It's alpha-2,3-sialyltransferase activity is specific toward type II glycan chains (Galbeta1-4GlcNAc) on glycoproteins and glycolipids such as neolactosides nLc4Cer and nLc6Cer, whose sialyl-products serve as precursors for the Lewis X antigen (By similarity). Critically involved in the synthesis of functional selectin ligands needed for neutrophil recruitment during inflammation and lymphocyte homing to the lymph nodes (By similarity).</text>
</comment>
<comment type="catalytic activity">
    <reaction evidence="2">
        <text>a neolactoside nLc4Cer(d18:1(4E)) + CMP-N-acetyl-beta-neuraminate = a neolactoside IV(3)-alpha-NeuAc-nLc4Cer(d18:1(4E)) + CMP + H(+)</text>
        <dbReference type="Rhea" id="RHEA:18913"/>
        <dbReference type="ChEBI" id="CHEBI:15378"/>
        <dbReference type="ChEBI" id="CHEBI:17006"/>
        <dbReference type="ChEBI" id="CHEBI:57812"/>
        <dbReference type="ChEBI" id="CHEBI:58665"/>
        <dbReference type="ChEBI" id="CHEBI:60377"/>
        <dbReference type="EC" id="2.4.3.6"/>
    </reaction>
    <physiologicalReaction direction="left-to-right" evidence="2">
        <dbReference type="Rhea" id="RHEA:18914"/>
    </physiologicalReaction>
</comment>
<comment type="catalytic activity">
    <reaction evidence="2">
        <text>a beta-D-galactosyl-(1-&gt;4)-N-acetyl-beta-D-glucosaminyl derivative + CMP-N-acetyl-beta-neuraminate = an N-acetyl-alpha-neuraminyl-(2-&gt;3)-beta-D-galactosyl-(1-&gt;4)-N-acetyl-beta-D-glucosaminyl derivative + CMP + H(+)</text>
        <dbReference type="Rhea" id="RHEA:52316"/>
        <dbReference type="ChEBI" id="CHEBI:15378"/>
        <dbReference type="ChEBI" id="CHEBI:57812"/>
        <dbReference type="ChEBI" id="CHEBI:60377"/>
        <dbReference type="ChEBI" id="CHEBI:133507"/>
        <dbReference type="ChEBI" id="CHEBI:136545"/>
        <dbReference type="EC" id="2.4.3.6"/>
    </reaction>
    <physiologicalReaction direction="left-to-right" evidence="2">
        <dbReference type="Rhea" id="RHEA:52317"/>
    </physiologicalReaction>
</comment>
<comment type="catalytic activity">
    <reaction evidence="2">
        <text>a neolactoside nLc6Cer(d18:1(4E)) + CMP-N-acetyl-beta-neuraminate = a neolactoside VI(3)-alpha-NeuNAc-nLc6Cer(d18:1(4E)) + CMP + H(+)</text>
        <dbReference type="Rhea" id="RHEA:80751"/>
        <dbReference type="ChEBI" id="CHEBI:15378"/>
        <dbReference type="ChEBI" id="CHEBI:57812"/>
        <dbReference type="ChEBI" id="CHEBI:60377"/>
        <dbReference type="ChEBI" id="CHEBI:61610"/>
        <dbReference type="ChEBI" id="CHEBI:144452"/>
    </reaction>
    <physiologicalReaction direction="left-to-right" evidence="2">
        <dbReference type="Rhea" id="RHEA:80752"/>
    </physiologicalReaction>
</comment>
<comment type="subcellular location">
    <subcellularLocation>
        <location evidence="4">Golgi apparatus membrane</location>
        <topology evidence="4">Single-pass type II membrane protein</topology>
    </subcellularLocation>
</comment>
<comment type="similarity">
    <text evidence="4">Belongs to the glycosyltransferase 29 family.</text>
</comment>
<accession>P61943</accession>
<evidence type="ECO:0000250" key="1">
    <source>
        <dbReference type="UniProtKB" id="Q8VIB3"/>
    </source>
</evidence>
<evidence type="ECO:0000250" key="2">
    <source>
        <dbReference type="UniProtKB" id="Q9Y274"/>
    </source>
</evidence>
<evidence type="ECO:0000255" key="3"/>
<evidence type="ECO:0000305" key="4"/>
<sequence length="331" mass="38145">MKGYVVAIFLSSIFLYYVLYCILWGTNGYWFPNEEMKSKNNVKNCFKKPAFASLLRFPQFYPFLCKADFVKVAATYGTNNFLLPYGVKTFESYFRSGLSKLQSCDLVGQFDTVPCKRCVVVGNGGVLKNKTLGAKIDSYDVIIRMNNGPVLGHEEEVGKRTTFRLFYPESVFSDPSHYDPNTTAVLVVFKPQDLRWLMEILIGKKINTDGFWKKPALKLIYKQYQIRILDPYIIREAAFQLLRFPRVFPKDQKPKHPTTGIIALTLAFHICSEVHLAGFKYNFYTPDSPLHYYGNATMSLMKKNAYHNLTAEQLFLKNLIKKKMVINLTQN</sequence>
<dbReference type="EC" id="2.4.3.6" evidence="2"/>
<dbReference type="EMBL" id="AJ626743">
    <property type="protein sequence ID" value="CAF25053.1"/>
    <property type="molecule type" value="mRNA"/>
</dbReference>
<dbReference type="SMR" id="P61943"/>
<dbReference type="FunCoup" id="P61943">
    <property type="interactions" value="219"/>
</dbReference>
<dbReference type="STRING" id="10116.ENSRNOP00000002255"/>
<dbReference type="CAZy" id="GT29">
    <property type="family name" value="Glycosyltransferase Family 29"/>
</dbReference>
<dbReference type="GlyCosmos" id="P61943">
    <property type="glycosylation" value="5 sites, No reported glycans"/>
</dbReference>
<dbReference type="GlyGen" id="P61943">
    <property type="glycosylation" value="5 sites"/>
</dbReference>
<dbReference type="iPTMnet" id="P61943"/>
<dbReference type="PhosphoSitePlus" id="P61943"/>
<dbReference type="PaxDb" id="10116-ENSRNOP00000002255"/>
<dbReference type="UCSC" id="RGD:1303279">
    <property type="organism name" value="rat"/>
</dbReference>
<dbReference type="AGR" id="RGD:1303279"/>
<dbReference type="RGD" id="1303279">
    <property type="gene designation" value="St3gal6"/>
</dbReference>
<dbReference type="eggNOG" id="KOG2692">
    <property type="taxonomic scope" value="Eukaryota"/>
</dbReference>
<dbReference type="InParanoid" id="P61943"/>
<dbReference type="PhylomeDB" id="P61943"/>
<dbReference type="Reactome" id="R-RNO-2022854">
    <property type="pathway name" value="Keratan sulfate biosynthesis"/>
</dbReference>
<dbReference type="Reactome" id="R-RNO-4085001">
    <property type="pathway name" value="Sialic acid metabolism"/>
</dbReference>
<dbReference type="Reactome" id="R-RNO-9037629">
    <property type="pathway name" value="Lewis blood group biosynthesis"/>
</dbReference>
<dbReference type="PRO" id="PR:P61943"/>
<dbReference type="Proteomes" id="UP000002494">
    <property type="component" value="Unplaced"/>
</dbReference>
<dbReference type="GO" id="GO:0000139">
    <property type="term" value="C:Golgi membrane"/>
    <property type="evidence" value="ECO:0007669"/>
    <property type="project" value="UniProtKB-SubCell"/>
</dbReference>
<dbReference type="GO" id="GO:0008118">
    <property type="term" value="F:N-acetyllactosaminide alpha-2,3-sialyltransferase activity"/>
    <property type="evidence" value="ECO:0000250"/>
    <property type="project" value="UniProtKB"/>
</dbReference>
<dbReference type="GO" id="GO:0008373">
    <property type="term" value="F:sialyltransferase activity"/>
    <property type="evidence" value="ECO:0000318"/>
    <property type="project" value="GO_Central"/>
</dbReference>
<dbReference type="GO" id="GO:0071354">
    <property type="term" value="P:cellular response to interleukin-6"/>
    <property type="evidence" value="ECO:0000250"/>
    <property type="project" value="UniProtKB"/>
</dbReference>
<dbReference type="GO" id="GO:0009247">
    <property type="term" value="P:glycolipid biosynthetic process"/>
    <property type="evidence" value="ECO:0000250"/>
    <property type="project" value="UniProtKB"/>
</dbReference>
<dbReference type="GO" id="GO:0006486">
    <property type="term" value="P:protein glycosylation"/>
    <property type="evidence" value="ECO:0000250"/>
    <property type="project" value="UniProtKB"/>
</dbReference>
<dbReference type="CDD" id="cd23984">
    <property type="entry name" value="GT29_ST3GAL6"/>
    <property type="match status" value="1"/>
</dbReference>
<dbReference type="FunFam" id="3.90.1480.20:FF:000007">
    <property type="entry name" value="Type 2 lactosamine alpha-2,3-sialyltransferase"/>
    <property type="match status" value="1"/>
</dbReference>
<dbReference type="Gene3D" id="3.90.1480.20">
    <property type="entry name" value="Glycosyl transferase family 29"/>
    <property type="match status" value="1"/>
</dbReference>
<dbReference type="InterPro" id="IPR001675">
    <property type="entry name" value="Glyco_trans_29"/>
</dbReference>
<dbReference type="InterPro" id="IPR051142">
    <property type="entry name" value="Glycosyltransferase_29"/>
</dbReference>
<dbReference type="InterPro" id="IPR038578">
    <property type="entry name" value="GT29-like_sf"/>
</dbReference>
<dbReference type="InterPro" id="IPR012163">
    <property type="entry name" value="Sialyl_trans"/>
</dbReference>
<dbReference type="PANTHER" id="PTHR13713">
    <property type="entry name" value="SIALYLTRANSFERASE"/>
    <property type="match status" value="1"/>
</dbReference>
<dbReference type="PANTHER" id="PTHR13713:SF8">
    <property type="entry name" value="TYPE 2 LACTOSAMINE ALPHA-2,3-SIALYLTRANSFERASE"/>
    <property type="match status" value="1"/>
</dbReference>
<dbReference type="Pfam" id="PF00777">
    <property type="entry name" value="Glyco_transf_29"/>
    <property type="match status" value="1"/>
</dbReference>
<dbReference type="PIRSF" id="PIRSF005557">
    <property type="entry name" value="Sialyl_trans"/>
    <property type="match status" value="1"/>
</dbReference>
<name>SIA10_RAT</name>
<organism>
    <name type="scientific">Rattus norvegicus</name>
    <name type="common">Rat</name>
    <dbReference type="NCBI Taxonomy" id="10116"/>
    <lineage>
        <taxon>Eukaryota</taxon>
        <taxon>Metazoa</taxon>
        <taxon>Chordata</taxon>
        <taxon>Craniata</taxon>
        <taxon>Vertebrata</taxon>
        <taxon>Euteleostomi</taxon>
        <taxon>Mammalia</taxon>
        <taxon>Eutheria</taxon>
        <taxon>Euarchontoglires</taxon>
        <taxon>Glires</taxon>
        <taxon>Rodentia</taxon>
        <taxon>Myomorpha</taxon>
        <taxon>Muroidea</taxon>
        <taxon>Muridae</taxon>
        <taxon>Murinae</taxon>
        <taxon>Rattus</taxon>
    </lineage>
</organism>
<feature type="chain" id="PRO_0000149308" description="Type 2 lactosamine alpha-2,3-sialyltransferase">
    <location>
        <begin position="1"/>
        <end position="331"/>
    </location>
</feature>
<feature type="topological domain" description="Cytoplasmic" evidence="3">
    <location>
        <begin position="1"/>
        <end position="4"/>
    </location>
</feature>
<feature type="transmembrane region" description="Helical; Signal-anchor for type II membrane protein" evidence="3">
    <location>
        <begin position="5"/>
        <end position="25"/>
    </location>
</feature>
<feature type="topological domain" description="Lumenal" evidence="3">
    <location>
        <begin position="26"/>
        <end position="331"/>
    </location>
</feature>
<feature type="glycosylation site" description="N-linked (GlcNAc...) asparagine" evidence="3">
    <location>
        <position position="129"/>
    </location>
</feature>
<feature type="glycosylation site" description="N-linked (GlcNAc...) asparagine" evidence="3">
    <location>
        <position position="181"/>
    </location>
</feature>
<feature type="glycosylation site" description="N-linked (GlcNAc...) asparagine" evidence="3">
    <location>
        <position position="295"/>
    </location>
</feature>
<feature type="glycosylation site" description="N-linked (GlcNAc...) asparagine" evidence="3">
    <location>
        <position position="308"/>
    </location>
</feature>
<feature type="glycosylation site" description="N-linked (GlcNAc...) asparagine" evidence="3">
    <location>
        <position position="327"/>
    </location>
</feature>
<proteinExistence type="evidence at transcript level"/>
<protein>
    <recommendedName>
        <fullName>Type 2 lactosamine alpha-2,3-sialyltransferase</fullName>
        <ecNumber evidence="2">2.4.3.6</ecNumber>
    </recommendedName>
    <alternativeName>
        <fullName>CMP-NeuAc:beta-galactoside alpha-2,3-sialyltransferase VI</fullName>
    </alternativeName>
    <alternativeName>
        <fullName>ST3Gal VI</fullName>
        <shortName>ST3GalVI</shortName>
    </alternativeName>
    <alternativeName>
        <fullName>Sialyltransferase 10</fullName>
    </alternativeName>
</protein>
<reference key="1">
    <citation type="submission" date="2004-02" db="EMBL/GenBank/DDBJ databases">
        <title>Phylogeny of sialyltransferases.</title>
        <authorList>
            <person name="Harduin-Lepers A."/>
            <person name="Martinez-Duncker I."/>
            <person name="Mollicone R."/>
            <person name="Delannoy P."/>
            <person name="Oriol R."/>
        </authorList>
    </citation>
    <scope>NUCLEOTIDE SEQUENCE [MRNA]</scope>
    <source>
        <strain>Sprague-Dawley</strain>
    </source>
</reference>